<dbReference type="EC" id="2.7.7.3" evidence="1"/>
<dbReference type="EMBL" id="AE005174">
    <property type="protein sequence ID" value="AAG58778.1"/>
    <property type="molecule type" value="Genomic_DNA"/>
</dbReference>
<dbReference type="EMBL" id="BA000007">
    <property type="protein sequence ID" value="BAB37932.1"/>
    <property type="molecule type" value="Genomic_DNA"/>
</dbReference>
<dbReference type="PIR" id="E91192">
    <property type="entry name" value="E91192"/>
</dbReference>
<dbReference type="PIR" id="F86039">
    <property type="entry name" value="F86039"/>
</dbReference>
<dbReference type="RefSeq" id="NP_312536.1">
    <property type="nucleotide sequence ID" value="NC_002695.1"/>
</dbReference>
<dbReference type="RefSeq" id="WP_001171866.1">
    <property type="nucleotide sequence ID" value="NZ_VOAI01000021.1"/>
</dbReference>
<dbReference type="SMR" id="P0A6I7"/>
<dbReference type="STRING" id="155864.Z5058"/>
<dbReference type="GeneID" id="75202203"/>
<dbReference type="GeneID" id="915539"/>
<dbReference type="KEGG" id="ece:Z5058"/>
<dbReference type="KEGG" id="ecs:ECs_4509"/>
<dbReference type="PATRIC" id="fig|386585.9.peg.4725"/>
<dbReference type="eggNOG" id="COG0669">
    <property type="taxonomic scope" value="Bacteria"/>
</dbReference>
<dbReference type="HOGENOM" id="CLU_100149_0_1_6"/>
<dbReference type="OMA" id="MALMNRK"/>
<dbReference type="UniPathway" id="UPA00241">
    <property type="reaction ID" value="UER00355"/>
</dbReference>
<dbReference type="Proteomes" id="UP000000558">
    <property type="component" value="Chromosome"/>
</dbReference>
<dbReference type="Proteomes" id="UP000002519">
    <property type="component" value="Chromosome"/>
</dbReference>
<dbReference type="GO" id="GO:0005737">
    <property type="term" value="C:cytoplasm"/>
    <property type="evidence" value="ECO:0007669"/>
    <property type="project" value="UniProtKB-SubCell"/>
</dbReference>
<dbReference type="GO" id="GO:0005524">
    <property type="term" value="F:ATP binding"/>
    <property type="evidence" value="ECO:0007669"/>
    <property type="project" value="UniProtKB-KW"/>
</dbReference>
<dbReference type="GO" id="GO:0004595">
    <property type="term" value="F:pantetheine-phosphate adenylyltransferase activity"/>
    <property type="evidence" value="ECO:0007669"/>
    <property type="project" value="UniProtKB-UniRule"/>
</dbReference>
<dbReference type="GO" id="GO:0015937">
    <property type="term" value="P:coenzyme A biosynthetic process"/>
    <property type="evidence" value="ECO:0007669"/>
    <property type="project" value="UniProtKB-UniRule"/>
</dbReference>
<dbReference type="CDD" id="cd02163">
    <property type="entry name" value="PPAT"/>
    <property type="match status" value="1"/>
</dbReference>
<dbReference type="FunFam" id="3.40.50.620:FF:000012">
    <property type="entry name" value="Phosphopantetheine adenylyltransferase"/>
    <property type="match status" value="1"/>
</dbReference>
<dbReference type="Gene3D" id="3.40.50.620">
    <property type="entry name" value="HUPs"/>
    <property type="match status" value="1"/>
</dbReference>
<dbReference type="HAMAP" id="MF_00151">
    <property type="entry name" value="PPAT_bact"/>
    <property type="match status" value="1"/>
</dbReference>
<dbReference type="InterPro" id="IPR004821">
    <property type="entry name" value="Cyt_trans-like"/>
</dbReference>
<dbReference type="InterPro" id="IPR001980">
    <property type="entry name" value="PPAT"/>
</dbReference>
<dbReference type="InterPro" id="IPR014729">
    <property type="entry name" value="Rossmann-like_a/b/a_fold"/>
</dbReference>
<dbReference type="NCBIfam" id="TIGR01510">
    <property type="entry name" value="coaD_prev_kdtB"/>
    <property type="match status" value="1"/>
</dbReference>
<dbReference type="NCBIfam" id="TIGR00125">
    <property type="entry name" value="cyt_tran_rel"/>
    <property type="match status" value="1"/>
</dbReference>
<dbReference type="PANTHER" id="PTHR21342">
    <property type="entry name" value="PHOSPHOPANTETHEINE ADENYLYLTRANSFERASE"/>
    <property type="match status" value="1"/>
</dbReference>
<dbReference type="PANTHER" id="PTHR21342:SF1">
    <property type="entry name" value="PHOSPHOPANTETHEINE ADENYLYLTRANSFERASE"/>
    <property type="match status" value="1"/>
</dbReference>
<dbReference type="Pfam" id="PF01467">
    <property type="entry name" value="CTP_transf_like"/>
    <property type="match status" value="1"/>
</dbReference>
<dbReference type="PRINTS" id="PR01020">
    <property type="entry name" value="LPSBIOSNTHSS"/>
</dbReference>
<dbReference type="SUPFAM" id="SSF52374">
    <property type="entry name" value="Nucleotidylyl transferase"/>
    <property type="match status" value="1"/>
</dbReference>
<organism>
    <name type="scientific">Escherichia coli O157:H7</name>
    <dbReference type="NCBI Taxonomy" id="83334"/>
    <lineage>
        <taxon>Bacteria</taxon>
        <taxon>Pseudomonadati</taxon>
        <taxon>Pseudomonadota</taxon>
        <taxon>Gammaproteobacteria</taxon>
        <taxon>Enterobacterales</taxon>
        <taxon>Enterobacteriaceae</taxon>
        <taxon>Escherichia</taxon>
    </lineage>
</organism>
<keyword id="KW-0067">ATP-binding</keyword>
<keyword id="KW-0173">Coenzyme A biosynthesis</keyword>
<keyword id="KW-0963">Cytoplasm</keyword>
<keyword id="KW-0460">Magnesium</keyword>
<keyword id="KW-0547">Nucleotide-binding</keyword>
<keyword id="KW-0548">Nucleotidyltransferase</keyword>
<keyword id="KW-1185">Reference proteome</keyword>
<keyword id="KW-0808">Transferase</keyword>
<comment type="function">
    <text evidence="1">Reversibly transfers an adenylyl group from ATP to 4'-phosphopantetheine, yielding dephospho-CoA (dPCoA) and pyrophosphate.</text>
</comment>
<comment type="catalytic activity">
    <reaction evidence="1">
        <text>(R)-4'-phosphopantetheine + ATP + H(+) = 3'-dephospho-CoA + diphosphate</text>
        <dbReference type="Rhea" id="RHEA:19801"/>
        <dbReference type="ChEBI" id="CHEBI:15378"/>
        <dbReference type="ChEBI" id="CHEBI:30616"/>
        <dbReference type="ChEBI" id="CHEBI:33019"/>
        <dbReference type="ChEBI" id="CHEBI:57328"/>
        <dbReference type="ChEBI" id="CHEBI:61723"/>
        <dbReference type="EC" id="2.7.7.3"/>
    </reaction>
</comment>
<comment type="cofactor">
    <cofactor evidence="1">
        <name>Mg(2+)</name>
        <dbReference type="ChEBI" id="CHEBI:18420"/>
    </cofactor>
</comment>
<comment type="pathway">
    <text evidence="1">Cofactor biosynthesis; coenzyme A biosynthesis; CoA from (R)-pantothenate: step 4/5.</text>
</comment>
<comment type="subunit">
    <text evidence="1">Homohexamer.</text>
</comment>
<comment type="subcellular location">
    <subcellularLocation>
        <location evidence="1">Cytoplasm</location>
    </subcellularLocation>
</comment>
<comment type="similarity">
    <text evidence="1">Belongs to the bacterial CoaD family.</text>
</comment>
<reference key="1">
    <citation type="journal article" date="2001" name="Nature">
        <title>Genome sequence of enterohaemorrhagic Escherichia coli O157:H7.</title>
        <authorList>
            <person name="Perna N.T."/>
            <person name="Plunkett G. III"/>
            <person name="Burland V."/>
            <person name="Mau B."/>
            <person name="Glasner J.D."/>
            <person name="Rose D.J."/>
            <person name="Mayhew G.F."/>
            <person name="Evans P.S."/>
            <person name="Gregor J."/>
            <person name="Kirkpatrick H.A."/>
            <person name="Posfai G."/>
            <person name="Hackett J."/>
            <person name="Klink S."/>
            <person name="Boutin A."/>
            <person name="Shao Y."/>
            <person name="Miller L."/>
            <person name="Grotbeck E.J."/>
            <person name="Davis N.W."/>
            <person name="Lim A."/>
            <person name="Dimalanta E.T."/>
            <person name="Potamousis K."/>
            <person name="Apodaca J."/>
            <person name="Anantharaman T.S."/>
            <person name="Lin J."/>
            <person name="Yen G."/>
            <person name="Schwartz D.C."/>
            <person name="Welch R.A."/>
            <person name="Blattner F.R."/>
        </authorList>
    </citation>
    <scope>NUCLEOTIDE SEQUENCE [LARGE SCALE GENOMIC DNA]</scope>
    <source>
        <strain>O157:H7 / EDL933 / ATCC 700927 / EHEC</strain>
    </source>
</reference>
<reference key="2">
    <citation type="journal article" date="2001" name="DNA Res.">
        <title>Complete genome sequence of enterohemorrhagic Escherichia coli O157:H7 and genomic comparison with a laboratory strain K-12.</title>
        <authorList>
            <person name="Hayashi T."/>
            <person name="Makino K."/>
            <person name="Ohnishi M."/>
            <person name="Kurokawa K."/>
            <person name="Ishii K."/>
            <person name="Yokoyama K."/>
            <person name="Han C.-G."/>
            <person name="Ohtsubo E."/>
            <person name="Nakayama K."/>
            <person name="Murata T."/>
            <person name="Tanaka M."/>
            <person name="Tobe T."/>
            <person name="Iida T."/>
            <person name="Takami H."/>
            <person name="Honda T."/>
            <person name="Sasakawa C."/>
            <person name="Ogasawara N."/>
            <person name="Yasunaga T."/>
            <person name="Kuhara S."/>
            <person name="Shiba T."/>
            <person name="Hattori M."/>
            <person name="Shinagawa H."/>
        </authorList>
    </citation>
    <scope>NUCLEOTIDE SEQUENCE [LARGE SCALE GENOMIC DNA]</scope>
    <source>
        <strain>O157:H7 / Sakai / RIMD 0509952 / EHEC</strain>
    </source>
</reference>
<evidence type="ECO:0000255" key="1">
    <source>
        <dbReference type="HAMAP-Rule" id="MF_00151"/>
    </source>
</evidence>
<proteinExistence type="inferred from homology"/>
<sequence>MQKRAIYPGTFDPITNGHIDIVTRATQMFDHVILAIAASPSKKPMFTLEERVALAQQATAHLGNVEVVGFSDLMANFARNQHATVLIRGLRAVADFEYEMQLAHMNRHLMPELESVFLMPSKEWSFISSSLVKEVARHQGDVTHFLPENVHQALMAKLA</sequence>
<feature type="chain" id="PRO_0000156205" description="Phosphopantetheine adenylyltransferase">
    <location>
        <begin position="1"/>
        <end position="159"/>
    </location>
</feature>
<feature type="binding site" evidence="1">
    <location>
        <begin position="10"/>
        <end position="11"/>
    </location>
    <ligand>
        <name>ATP</name>
        <dbReference type="ChEBI" id="CHEBI:30616"/>
    </ligand>
</feature>
<feature type="binding site" evidence="1">
    <location>
        <position position="10"/>
    </location>
    <ligand>
        <name>substrate</name>
    </ligand>
</feature>
<feature type="binding site" evidence="1">
    <location>
        <position position="18"/>
    </location>
    <ligand>
        <name>ATP</name>
        <dbReference type="ChEBI" id="CHEBI:30616"/>
    </ligand>
</feature>
<feature type="binding site" evidence="1">
    <location>
        <position position="42"/>
    </location>
    <ligand>
        <name>substrate</name>
    </ligand>
</feature>
<feature type="binding site" evidence="1">
    <location>
        <position position="74"/>
    </location>
    <ligand>
        <name>substrate</name>
    </ligand>
</feature>
<feature type="binding site" evidence="1">
    <location>
        <position position="88"/>
    </location>
    <ligand>
        <name>substrate</name>
    </ligand>
</feature>
<feature type="binding site" evidence="1">
    <location>
        <begin position="89"/>
        <end position="91"/>
    </location>
    <ligand>
        <name>ATP</name>
        <dbReference type="ChEBI" id="CHEBI:30616"/>
    </ligand>
</feature>
<feature type="binding site" evidence="1">
    <location>
        <position position="99"/>
    </location>
    <ligand>
        <name>ATP</name>
        <dbReference type="ChEBI" id="CHEBI:30616"/>
    </ligand>
</feature>
<feature type="binding site" evidence="1">
    <location>
        <begin position="124"/>
        <end position="130"/>
    </location>
    <ligand>
        <name>ATP</name>
        <dbReference type="ChEBI" id="CHEBI:30616"/>
    </ligand>
</feature>
<feature type="site" description="Transition state stabilizer" evidence="1">
    <location>
        <position position="18"/>
    </location>
</feature>
<accession>P0A6I7</accession>
<accession>P23875</accession>
<gene>
    <name evidence="1" type="primary">coaD</name>
    <name type="synonym">kdtB</name>
    <name type="ordered locus">Z5058</name>
    <name type="ordered locus">ECs4509</name>
</gene>
<name>COAD_ECO57</name>
<protein>
    <recommendedName>
        <fullName evidence="1">Phosphopantetheine adenylyltransferase</fullName>
        <ecNumber evidence="1">2.7.7.3</ecNumber>
    </recommendedName>
    <alternativeName>
        <fullName evidence="1">Dephospho-CoA pyrophosphorylase</fullName>
    </alternativeName>
    <alternativeName>
        <fullName evidence="1">Pantetheine-phosphate adenylyltransferase</fullName>
        <shortName evidence="1">PPAT</shortName>
    </alternativeName>
</protein>